<keyword id="KW-0963">Cytoplasm</keyword>
<keyword id="KW-0489">Methyltransferase</keyword>
<keyword id="KW-1185">Reference proteome</keyword>
<keyword id="KW-0698">rRNA processing</keyword>
<keyword id="KW-0949">S-adenosyl-L-methionine</keyword>
<keyword id="KW-0808">Transferase</keyword>
<accession>Q7VZ56</accession>
<proteinExistence type="inferred from homology"/>
<feature type="chain" id="PRO_0000155474" description="Ribosomal RNA large subunit methyltransferase E">
    <location>
        <begin position="1"/>
        <end position="210"/>
    </location>
</feature>
<feature type="active site" description="Proton acceptor" evidence="1">
    <location>
        <position position="166"/>
    </location>
</feature>
<feature type="binding site" evidence="1">
    <location>
        <position position="60"/>
    </location>
    <ligand>
        <name>S-adenosyl-L-methionine</name>
        <dbReference type="ChEBI" id="CHEBI:59789"/>
    </ligand>
</feature>
<feature type="binding site" evidence="1">
    <location>
        <position position="62"/>
    </location>
    <ligand>
        <name>S-adenosyl-L-methionine</name>
        <dbReference type="ChEBI" id="CHEBI:59789"/>
    </ligand>
</feature>
<feature type="binding site" evidence="1">
    <location>
        <position position="85"/>
    </location>
    <ligand>
        <name>S-adenosyl-L-methionine</name>
        <dbReference type="ChEBI" id="CHEBI:59789"/>
    </ligand>
</feature>
<feature type="binding site" evidence="1">
    <location>
        <position position="101"/>
    </location>
    <ligand>
        <name>S-adenosyl-L-methionine</name>
        <dbReference type="ChEBI" id="CHEBI:59789"/>
    </ligand>
</feature>
<feature type="binding site" evidence="1">
    <location>
        <position position="126"/>
    </location>
    <ligand>
        <name>S-adenosyl-L-methionine</name>
        <dbReference type="ChEBI" id="CHEBI:59789"/>
    </ligand>
</feature>
<sequence>MAKNKFSKDWIHQHINDPYVKLAQQKGYRARAAFKLLEILDAEKLMRRGDVVVDLGSAPGSWSQVARERLAGPGGVVDGRIIALDLLPMEPVAGVEFIQGDFREEEVLEQLARMVDGQPVDLVISDMAPNLSGVGVADSARIQHVCELALEFACAHLKPNGALIVKAFHGSGFSQIVQSYKQRFKRVVERKPKASRDKSSETFLVARDLK</sequence>
<dbReference type="EC" id="2.1.1.166" evidence="1"/>
<dbReference type="EMBL" id="BX640414">
    <property type="protein sequence ID" value="CAE41377.1"/>
    <property type="molecule type" value="Genomic_DNA"/>
</dbReference>
<dbReference type="RefSeq" id="NP_879862.1">
    <property type="nucleotide sequence ID" value="NC_002929.2"/>
</dbReference>
<dbReference type="RefSeq" id="WP_010930175.1">
    <property type="nucleotide sequence ID" value="NZ_CP039022.1"/>
</dbReference>
<dbReference type="SMR" id="Q7VZ56"/>
<dbReference type="STRING" id="257313.BP1078"/>
<dbReference type="PaxDb" id="257313-BP1078"/>
<dbReference type="KEGG" id="bpe:BP1078"/>
<dbReference type="PATRIC" id="fig|257313.5.peg.1153"/>
<dbReference type="eggNOG" id="COG0293">
    <property type="taxonomic scope" value="Bacteria"/>
</dbReference>
<dbReference type="HOGENOM" id="CLU_009422_4_1_4"/>
<dbReference type="Proteomes" id="UP000002676">
    <property type="component" value="Chromosome"/>
</dbReference>
<dbReference type="GO" id="GO:0005737">
    <property type="term" value="C:cytoplasm"/>
    <property type="evidence" value="ECO:0007669"/>
    <property type="project" value="UniProtKB-SubCell"/>
</dbReference>
<dbReference type="GO" id="GO:0008650">
    <property type="term" value="F:rRNA (uridine-2'-O-)-methyltransferase activity"/>
    <property type="evidence" value="ECO:0007669"/>
    <property type="project" value="UniProtKB-UniRule"/>
</dbReference>
<dbReference type="CDD" id="cd02440">
    <property type="entry name" value="AdoMet_MTases"/>
    <property type="match status" value="1"/>
</dbReference>
<dbReference type="FunFam" id="3.40.50.150:FF:000005">
    <property type="entry name" value="Ribosomal RNA large subunit methyltransferase E"/>
    <property type="match status" value="1"/>
</dbReference>
<dbReference type="Gene3D" id="3.40.50.150">
    <property type="entry name" value="Vaccinia Virus protein VP39"/>
    <property type="match status" value="1"/>
</dbReference>
<dbReference type="HAMAP" id="MF_01547">
    <property type="entry name" value="RNA_methyltr_E"/>
    <property type="match status" value="1"/>
</dbReference>
<dbReference type="InterPro" id="IPR050082">
    <property type="entry name" value="RNA_methyltr_RlmE"/>
</dbReference>
<dbReference type="InterPro" id="IPR002877">
    <property type="entry name" value="RNA_MeTrfase_FtsJ_dom"/>
</dbReference>
<dbReference type="InterPro" id="IPR015507">
    <property type="entry name" value="rRNA-MeTfrase_E"/>
</dbReference>
<dbReference type="InterPro" id="IPR029063">
    <property type="entry name" value="SAM-dependent_MTases_sf"/>
</dbReference>
<dbReference type="PANTHER" id="PTHR10920">
    <property type="entry name" value="RIBOSOMAL RNA METHYLTRANSFERASE"/>
    <property type="match status" value="1"/>
</dbReference>
<dbReference type="PANTHER" id="PTHR10920:SF18">
    <property type="entry name" value="RRNA METHYLTRANSFERASE 2, MITOCHONDRIAL"/>
    <property type="match status" value="1"/>
</dbReference>
<dbReference type="Pfam" id="PF01728">
    <property type="entry name" value="FtsJ"/>
    <property type="match status" value="1"/>
</dbReference>
<dbReference type="PIRSF" id="PIRSF005461">
    <property type="entry name" value="23S_rRNA_mtase"/>
    <property type="match status" value="1"/>
</dbReference>
<dbReference type="SUPFAM" id="SSF53335">
    <property type="entry name" value="S-adenosyl-L-methionine-dependent methyltransferases"/>
    <property type="match status" value="1"/>
</dbReference>
<evidence type="ECO:0000255" key="1">
    <source>
        <dbReference type="HAMAP-Rule" id="MF_01547"/>
    </source>
</evidence>
<comment type="function">
    <text evidence="1">Specifically methylates the uridine in position 2552 of 23S rRNA at the 2'-O position of the ribose in the fully assembled 50S ribosomal subunit.</text>
</comment>
<comment type="catalytic activity">
    <reaction evidence="1">
        <text>uridine(2552) in 23S rRNA + S-adenosyl-L-methionine = 2'-O-methyluridine(2552) in 23S rRNA + S-adenosyl-L-homocysteine + H(+)</text>
        <dbReference type="Rhea" id="RHEA:42720"/>
        <dbReference type="Rhea" id="RHEA-COMP:10202"/>
        <dbReference type="Rhea" id="RHEA-COMP:10203"/>
        <dbReference type="ChEBI" id="CHEBI:15378"/>
        <dbReference type="ChEBI" id="CHEBI:57856"/>
        <dbReference type="ChEBI" id="CHEBI:59789"/>
        <dbReference type="ChEBI" id="CHEBI:65315"/>
        <dbReference type="ChEBI" id="CHEBI:74478"/>
        <dbReference type="EC" id="2.1.1.166"/>
    </reaction>
</comment>
<comment type="subcellular location">
    <subcellularLocation>
        <location evidence="1">Cytoplasm</location>
    </subcellularLocation>
</comment>
<comment type="similarity">
    <text evidence="1">Belongs to the class I-like SAM-binding methyltransferase superfamily. RNA methyltransferase RlmE family.</text>
</comment>
<protein>
    <recommendedName>
        <fullName evidence="1">Ribosomal RNA large subunit methyltransferase E</fullName>
        <ecNumber evidence="1">2.1.1.166</ecNumber>
    </recommendedName>
    <alternativeName>
        <fullName evidence="1">23S rRNA Um2552 methyltransferase</fullName>
    </alternativeName>
    <alternativeName>
        <fullName evidence="1">rRNA (uridine-2'-O-)-methyltransferase</fullName>
    </alternativeName>
</protein>
<gene>
    <name evidence="1" type="primary">rlmE</name>
    <name evidence="1" type="synonym">ftsJ</name>
    <name evidence="1" type="synonym">rrmJ</name>
    <name type="ordered locus">BP1078</name>
</gene>
<name>RLME_BORPE</name>
<organism>
    <name type="scientific">Bordetella pertussis (strain Tohama I / ATCC BAA-589 / NCTC 13251)</name>
    <dbReference type="NCBI Taxonomy" id="257313"/>
    <lineage>
        <taxon>Bacteria</taxon>
        <taxon>Pseudomonadati</taxon>
        <taxon>Pseudomonadota</taxon>
        <taxon>Betaproteobacteria</taxon>
        <taxon>Burkholderiales</taxon>
        <taxon>Alcaligenaceae</taxon>
        <taxon>Bordetella</taxon>
    </lineage>
</organism>
<reference key="1">
    <citation type="journal article" date="2003" name="Nat. Genet.">
        <title>Comparative analysis of the genome sequences of Bordetella pertussis, Bordetella parapertussis and Bordetella bronchiseptica.</title>
        <authorList>
            <person name="Parkhill J."/>
            <person name="Sebaihia M."/>
            <person name="Preston A."/>
            <person name="Murphy L.D."/>
            <person name="Thomson N.R."/>
            <person name="Harris D.E."/>
            <person name="Holden M.T.G."/>
            <person name="Churcher C.M."/>
            <person name="Bentley S.D."/>
            <person name="Mungall K.L."/>
            <person name="Cerdeno-Tarraga A.-M."/>
            <person name="Temple L."/>
            <person name="James K.D."/>
            <person name="Harris B."/>
            <person name="Quail M.A."/>
            <person name="Achtman M."/>
            <person name="Atkin R."/>
            <person name="Baker S."/>
            <person name="Basham D."/>
            <person name="Bason N."/>
            <person name="Cherevach I."/>
            <person name="Chillingworth T."/>
            <person name="Collins M."/>
            <person name="Cronin A."/>
            <person name="Davis P."/>
            <person name="Doggett J."/>
            <person name="Feltwell T."/>
            <person name="Goble A."/>
            <person name="Hamlin N."/>
            <person name="Hauser H."/>
            <person name="Holroyd S."/>
            <person name="Jagels K."/>
            <person name="Leather S."/>
            <person name="Moule S."/>
            <person name="Norberczak H."/>
            <person name="O'Neil S."/>
            <person name="Ormond D."/>
            <person name="Price C."/>
            <person name="Rabbinowitsch E."/>
            <person name="Rutter S."/>
            <person name="Sanders M."/>
            <person name="Saunders D."/>
            <person name="Seeger K."/>
            <person name="Sharp S."/>
            <person name="Simmonds M."/>
            <person name="Skelton J."/>
            <person name="Squares R."/>
            <person name="Squares S."/>
            <person name="Stevens K."/>
            <person name="Unwin L."/>
            <person name="Whitehead S."/>
            <person name="Barrell B.G."/>
            <person name="Maskell D.J."/>
        </authorList>
    </citation>
    <scope>NUCLEOTIDE SEQUENCE [LARGE SCALE GENOMIC DNA]</scope>
    <source>
        <strain>Tohama I / ATCC BAA-589 / NCTC 13251</strain>
    </source>
</reference>